<reference key="1">
    <citation type="journal article" date="2006" name="Mol. Microbiol.">
        <title>Role of pathogenicity island-associated integrases in the genome plasticity of uropathogenic Escherichia coli strain 536.</title>
        <authorList>
            <person name="Hochhut B."/>
            <person name="Wilde C."/>
            <person name="Balling G."/>
            <person name="Middendorf B."/>
            <person name="Dobrindt U."/>
            <person name="Brzuszkiewicz E."/>
            <person name="Gottschalk G."/>
            <person name="Carniel E."/>
            <person name="Hacker J."/>
        </authorList>
    </citation>
    <scope>NUCLEOTIDE SEQUENCE [LARGE SCALE GENOMIC DNA]</scope>
    <source>
        <strain>536 / UPEC</strain>
    </source>
</reference>
<name>PYRG_ECOL5</name>
<accession>Q0TE79</accession>
<organism>
    <name type="scientific">Escherichia coli O6:K15:H31 (strain 536 / UPEC)</name>
    <dbReference type="NCBI Taxonomy" id="362663"/>
    <lineage>
        <taxon>Bacteria</taxon>
        <taxon>Pseudomonadati</taxon>
        <taxon>Pseudomonadota</taxon>
        <taxon>Gammaproteobacteria</taxon>
        <taxon>Enterobacterales</taxon>
        <taxon>Enterobacteriaceae</taxon>
        <taxon>Escherichia</taxon>
    </lineage>
</organism>
<sequence>MTTNYIFVTGGVVSSLGKGIAAASLAAILEARGLNVTIMKLDPYINVDPGTMSPIQHGEVFVTEDGAETDLDLGHYERFIRTKMSRRNNFTTGRIYSDVLRKERRGDYLGATVQVIPHITNAIKERVLEGGEGHDVVLVEIGGTVGDIESLPFLEAIRQMAVEIGREHTLFMHLTLVPYMAASGEVKTKPTQHSVKELLSIGIQPDILICRSDRAVPANERAKIALFCNVPEKAVISLKDVDSIYKIPGLLKSQGLDDYICKRFSLNCPEANLSEWEQVIFEEANPVSEVTIGMVGKYIELPDAYKSVIEALKHGGLKNRVSVNIKLIDSQDVETRGVEILKGLDAILVPGGFGYRGVEGMITTARFARENNIPYLGICLGMQVALIDYARHVANMENANSTEFVPDCKYPVVALITEWRDENGNVEVRSEKSDLGGTMRLGAQQCQLVDDSLVRQLYNAPTIVERHRHRYEVNNMLLKQIEDAGLRVAGRSGDDQLVEIIEVPNHPWFVACQFHPEFTSTPRDGHPLFAGFVKAASEFQKRQAK</sequence>
<protein>
    <recommendedName>
        <fullName evidence="1">CTP synthase</fullName>
        <ecNumber evidence="1">6.3.4.2</ecNumber>
    </recommendedName>
    <alternativeName>
        <fullName evidence="1">Cytidine 5'-triphosphate synthase</fullName>
    </alternativeName>
    <alternativeName>
        <fullName evidence="1">Cytidine triphosphate synthetase</fullName>
        <shortName evidence="1">CTP synthetase</shortName>
        <shortName evidence="1">CTPS</shortName>
    </alternativeName>
    <alternativeName>
        <fullName evidence="1">UTP--ammonia ligase</fullName>
    </alternativeName>
</protein>
<evidence type="ECO:0000255" key="1">
    <source>
        <dbReference type="HAMAP-Rule" id="MF_01227"/>
    </source>
</evidence>
<dbReference type="EC" id="6.3.4.2" evidence="1"/>
<dbReference type="EMBL" id="CP000247">
    <property type="protein sequence ID" value="ABG70750.1"/>
    <property type="molecule type" value="Genomic_DNA"/>
</dbReference>
<dbReference type="RefSeq" id="WP_000210878.1">
    <property type="nucleotide sequence ID" value="NC_008253.1"/>
</dbReference>
<dbReference type="SMR" id="Q0TE79"/>
<dbReference type="MEROPS" id="C26.964"/>
<dbReference type="GeneID" id="93779218"/>
<dbReference type="KEGG" id="ecp:ECP_2761"/>
<dbReference type="HOGENOM" id="CLU_011675_5_0_6"/>
<dbReference type="UniPathway" id="UPA00159">
    <property type="reaction ID" value="UER00277"/>
</dbReference>
<dbReference type="Proteomes" id="UP000009182">
    <property type="component" value="Chromosome"/>
</dbReference>
<dbReference type="GO" id="GO:0005829">
    <property type="term" value="C:cytosol"/>
    <property type="evidence" value="ECO:0007669"/>
    <property type="project" value="TreeGrafter"/>
</dbReference>
<dbReference type="GO" id="GO:0005524">
    <property type="term" value="F:ATP binding"/>
    <property type="evidence" value="ECO:0007669"/>
    <property type="project" value="UniProtKB-KW"/>
</dbReference>
<dbReference type="GO" id="GO:0003883">
    <property type="term" value="F:CTP synthase activity"/>
    <property type="evidence" value="ECO:0007669"/>
    <property type="project" value="UniProtKB-UniRule"/>
</dbReference>
<dbReference type="GO" id="GO:0004359">
    <property type="term" value="F:glutaminase activity"/>
    <property type="evidence" value="ECO:0007669"/>
    <property type="project" value="RHEA"/>
</dbReference>
<dbReference type="GO" id="GO:0042802">
    <property type="term" value="F:identical protein binding"/>
    <property type="evidence" value="ECO:0007669"/>
    <property type="project" value="TreeGrafter"/>
</dbReference>
<dbReference type="GO" id="GO:0046872">
    <property type="term" value="F:metal ion binding"/>
    <property type="evidence" value="ECO:0007669"/>
    <property type="project" value="UniProtKB-KW"/>
</dbReference>
<dbReference type="GO" id="GO:0044210">
    <property type="term" value="P:'de novo' CTP biosynthetic process"/>
    <property type="evidence" value="ECO:0007669"/>
    <property type="project" value="UniProtKB-UniRule"/>
</dbReference>
<dbReference type="GO" id="GO:0019856">
    <property type="term" value="P:pyrimidine nucleobase biosynthetic process"/>
    <property type="evidence" value="ECO:0007669"/>
    <property type="project" value="TreeGrafter"/>
</dbReference>
<dbReference type="CDD" id="cd03113">
    <property type="entry name" value="CTPS_N"/>
    <property type="match status" value="1"/>
</dbReference>
<dbReference type="CDD" id="cd01746">
    <property type="entry name" value="GATase1_CTP_Synthase"/>
    <property type="match status" value="1"/>
</dbReference>
<dbReference type="FunFam" id="3.40.50.300:FF:000009">
    <property type="entry name" value="CTP synthase"/>
    <property type="match status" value="1"/>
</dbReference>
<dbReference type="FunFam" id="3.40.50.880:FF:000002">
    <property type="entry name" value="CTP synthase"/>
    <property type="match status" value="1"/>
</dbReference>
<dbReference type="Gene3D" id="3.40.50.880">
    <property type="match status" value="1"/>
</dbReference>
<dbReference type="Gene3D" id="3.40.50.300">
    <property type="entry name" value="P-loop containing nucleotide triphosphate hydrolases"/>
    <property type="match status" value="1"/>
</dbReference>
<dbReference type="HAMAP" id="MF_01227">
    <property type="entry name" value="PyrG"/>
    <property type="match status" value="1"/>
</dbReference>
<dbReference type="InterPro" id="IPR029062">
    <property type="entry name" value="Class_I_gatase-like"/>
</dbReference>
<dbReference type="InterPro" id="IPR004468">
    <property type="entry name" value="CTP_synthase"/>
</dbReference>
<dbReference type="InterPro" id="IPR017456">
    <property type="entry name" value="CTP_synthase_N"/>
</dbReference>
<dbReference type="InterPro" id="IPR017926">
    <property type="entry name" value="GATASE"/>
</dbReference>
<dbReference type="InterPro" id="IPR033828">
    <property type="entry name" value="GATase1_CTP_Synthase"/>
</dbReference>
<dbReference type="InterPro" id="IPR027417">
    <property type="entry name" value="P-loop_NTPase"/>
</dbReference>
<dbReference type="NCBIfam" id="NF003792">
    <property type="entry name" value="PRK05380.1"/>
    <property type="match status" value="1"/>
</dbReference>
<dbReference type="NCBIfam" id="TIGR00337">
    <property type="entry name" value="PyrG"/>
    <property type="match status" value="1"/>
</dbReference>
<dbReference type="PANTHER" id="PTHR11550">
    <property type="entry name" value="CTP SYNTHASE"/>
    <property type="match status" value="1"/>
</dbReference>
<dbReference type="PANTHER" id="PTHR11550:SF0">
    <property type="entry name" value="CTP SYNTHASE-RELATED"/>
    <property type="match status" value="1"/>
</dbReference>
<dbReference type="Pfam" id="PF06418">
    <property type="entry name" value="CTP_synth_N"/>
    <property type="match status" value="1"/>
</dbReference>
<dbReference type="Pfam" id="PF00117">
    <property type="entry name" value="GATase"/>
    <property type="match status" value="1"/>
</dbReference>
<dbReference type="SUPFAM" id="SSF52317">
    <property type="entry name" value="Class I glutamine amidotransferase-like"/>
    <property type="match status" value="1"/>
</dbReference>
<dbReference type="SUPFAM" id="SSF52540">
    <property type="entry name" value="P-loop containing nucleoside triphosphate hydrolases"/>
    <property type="match status" value="1"/>
</dbReference>
<dbReference type="PROSITE" id="PS51273">
    <property type="entry name" value="GATASE_TYPE_1"/>
    <property type="match status" value="1"/>
</dbReference>
<feature type="chain" id="PRO_0000266118" description="CTP synthase">
    <location>
        <begin position="1"/>
        <end position="545"/>
    </location>
</feature>
<feature type="domain" description="Glutamine amidotransferase type-1" evidence="1">
    <location>
        <begin position="291"/>
        <end position="542"/>
    </location>
</feature>
<feature type="region of interest" description="Amidoligase domain" evidence="1">
    <location>
        <begin position="1"/>
        <end position="266"/>
    </location>
</feature>
<feature type="active site" description="Nucleophile; for glutamine hydrolysis" evidence="1">
    <location>
        <position position="379"/>
    </location>
</feature>
<feature type="active site" evidence="1">
    <location>
        <position position="515"/>
    </location>
</feature>
<feature type="active site" evidence="1">
    <location>
        <position position="517"/>
    </location>
</feature>
<feature type="binding site" evidence="1">
    <location>
        <position position="14"/>
    </location>
    <ligand>
        <name>CTP</name>
        <dbReference type="ChEBI" id="CHEBI:37563"/>
        <note>allosteric inhibitor</note>
    </ligand>
</feature>
<feature type="binding site" evidence="1">
    <location>
        <position position="14"/>
    </location>
    <ligand>
        <name>UTP</name>
        <dbReference type="ChEBI" id="CHEBI:46398"/>
    </ligand>
</feature>
<feature type="binding site" evidence="1">
    <location>
        <begin position="15"/>
        <end position="20"/>
    </location>
    <ligand>
        <name>ATP</name>
        <dbReference type="ChEBI" id="CHEBI:30616"/>
    </ligand>
</feature>
<feature type="binding site" evidence="1">
    <location>
        <position position="72"/>
    </location>
    <ligand>
        <name>ATP</name>
        <dbReference type="ChEBI" id="CHEBI:30616"/>
    </ligand>
</feature>
<feature type="binding site" evidence="1">
    <location>
        <position position="72"/>
    </location>
    <ligand>
        <name>Mg(2+)</name>
        <dbReference type="ChEBI" id="CHEBI:18420"/>
    </ligand>
</feature>
<feature type="binding site" evidence="1">
    <location>
        <position position="140"/>
    </location>
    <ligand>
        <name>Mg(2+)</name>
        <dbReference type="ChEBI" id="CHEBI:18420"/>
    </ligand>
</feature>
<feature type="binding site" evidence="1">
    <location>
        <begin position="147"/>
        <end position="149"/>
    </location>
    <ligand>
        <name>CTP</name>
        <dbReference type="ChEBI" id="CHEBI:37563"/>
        <note>allosteric inhibitor</note>
    </ligand>
</feature>
<feature type="binding site" evidence="1">
    <location>
        <begin position="187"/>
        <end position="192"/>
    </location>
    <ligand>
        <name>CTP</name>
        <dbReference type="ChEBI" id="CHEBI:37563"/>
        <note>allosteric inhibitor</note>
    </ligand>
</feature>
<feature type="binding site" evidence="1">
    <location>
        <begin position="187"/>
        <end position="192"/>
    </location>
    <ligand>
        <name>UTP</name>
        <dbReference type="ChEBI" id="CHEBI:46398"/>
    </ligand>
</feature>
<feature type="binding site" evidence="1">
    <location>
        <position position="223"/>
    </location>
    <ligand>
        <name>CTP</name>
        <dbReference type="ChEBI" id="CHEBI:37563"/>
        <note>allosteric inhibitor</note>
    </ligand>
</feature>
<feature type="binding site" evidence="1">
    <location>
        <position position="223"/>
    </location>
    <ligand>
        <name>UTP</name>
        <dbReference type="ChEBI" id="CHEBI:46398"/>
    </ligand>
</feature>
<feature type="binding site" evidence="1">
    <location>
        <begin position="239"/>
        <end position="241"/>
    </location>
    <ligand>
        <name>ATP</name>
        <dbReference type="ChEBI" id="CHEBI:30616"/>
    </ligand>
</feature>
<feature type="binding site" evidence="1">
    <location>
        <position position="352"/>
    </location>
    <ligand>
        <name>L-glutamine</name>
        <dbReference type="ChEBI" id="CHEBI:58359"/>
    </ligand>
</feature>
<feature type="binding site" evidence="1">
    <location>
        <begin position="380"/>
        <end position="383"/>
    </location>
    <ligand>
        <name>L-glutamine</name>
        <dbReference type="ChEBI" id="CHEBI:58359"/>
    </ligand>
</feature>
<feature type="binding site" evidence="1">
    <location>
        <position position="403"/>
    </location>
    <ligand>
        <name>L-glutamine</name>
        <dbReference type="ChEBI" id="CHEBI:58359"/>
    </ligand>
</feature>
<feature type="binding site" evidence="1">
    <location>
        <position position="470"/>
    </location>
    <ligand>
        <name>L-glutamine</name>
        <dbReference type="ChEBI" id="CHEBI:58359"/>
    </ligand>
</feature>
<comment type="function">
    <text evidence="1">Catalyzes the ATP-dependent amination of UTP to CTP with either L-glutamine or ammonia as the source of nitrogen. Regulates intracellular CTP levels through interactions with the four ribonucleotide triphosphates.</text>
</comment>
<comment type="catalytic activity">
    <reaction evidence="1">
        <text>UTP + L-glutamine + ATP + H2O = CTP + L-glutamate + ADP + phosphate + 2 H(+)</text>
        <dbReference type="Rhea" id="RHEA:26426"/>
        <dbReference type="ChEBI" id="CHEBI:15377"/>
        <dbReference type="ChEBI" id="CHEBI:15378"/>
        <dbReference type="ChEBI" id="CHEBI:29985"/>
        <dbReference type="ChEBI" id="CHEBI:30616"/>
        <dbReference type="ChEBI" id="CHEBI:37563"/>
        <dbReference type="ChEBI" id="CHEBI:43474"/>
        <dbReference type="ChEBI" id="CHEBI:46398"/>
        <dbReference type="ChEBI" id="CHEBI:58359"/>
        <dbReference type="ChEBI" id="CHEBI:456216"/>
        <dbReference type="EC" id="6.3.4.2"/>
    </reaction>
</comment>
<comment type="catalytic activity">
    <reaction evidence="1">
        <text>L-glutamine + H2O = L-glutamate + NH4(+)</text>
        <dbReference type="Rhea" id="RHEA:15889"/>
        <dbReference type="ChEBI" id="CHEBI:15377"/>
        <dbReference type="ChEBI" id="CHEBI:28938"/>
        <dbReference type="ChEBI" id="CHEBI:29985"/>
        <dbReference type="ChEBI" id="CHEBI:58359"/>
    </reaction>
</comment>
<comment type="catalytic activity">
    <reaction evidence="1">
        <text>UTP + NH4(+) + ATP = CTP + ADP + phosphate + 2 H(+)</text>
        <dbReference type="Rhea" id="RHEA:16597"/>
        <dbReference type="ChEBI" id="CHEBI:15378"/>
        <dbReference type="ChEBI" id="CHEBI:28938"/>
        <dbReference type="ChEBI" id="CHEBI:30616"/>
        <dbReference type="ChEBI" id="CHEBI:37563"/>
        <dbReference type="ChEBI" id="CHEBI:43474"/>
        <dbReference type="ChEBI" id="CHEBI:46398"/>
        <dbReference type="ChEBI" id="CHEBI:456216"/>
    </reaction>
</comment>
<comment type="activity regulation">
    <text evidence="1">Allosterically activated by GTP, when glutamine is the substrate; GTP has no effect on the reaction when ammonia is the substrate. The allosteric effector GTP functions by stabilizing the protein conformation that binds the tetrahedral intermediate(s) formed during glutamine hydrolysis. Inhibited by the product CTP, via allosteric rather than competitive inhibition.</text>
</comment>
<comment type="pathway">
    <text evidence="1">Pyrimidine metabolism; CTP biosynthesis via de novo pathway; CTP from UDP: step 2/2.</text>
</comment>
<comment type="subunit">
    <text evidence="1">Homotetramer.</text>
</comment>
<comment type="miscellaneous">
    <text evidence="1">CTPSs have evolved a hybrid strategy for distinguishing between UTP and CTP. The overlapping regions of the product feedback inhibitory and substrate sites recognize a common feature in both compounds, the triphosphate moiety. To differentiate isosteric substrate and product pyrimidine rings, an additional pocket far from the expected kinase/ligase catalytic site, specifically recognizes the cytosine and ribose portions of the product inhibitor.</text>
</comment>
<comment type="similarity">
    <text evidence="1">Belongs to the CTP synthase family.</text>
</comment>
<proteinExistence type="inferred from homology"/>
<keyword id="KW-0067">ATP-binding</keyword>
<keyword id="KW-0315">Glutamine amidotransferase</keyword>
<keyword id="KW-0436">Ligase</keyword>
<keyword id="KW-0460">Magnesium</keyword>
<keyword id="KW-0479">Metal-binding</keyword>
<keyword id="KW-0547">Nucleotide-binding</keyword>
<keyword id="KW-0665">Pyrimidine biosynthesis</keyword>
<gene>
    <name evidence="1" type="primary">pyrG</name>
    <name type="ordered locus">ECP_2761</name>
</gene>